<protein>
    <recommendedName>
        <fullName evidence="1">UPF0761 membrane protein YPDSF_3877</fullName>
    </recommendedName>
</protein>
<gene>
    <name type="ordered locus">YPDSF_3877</name>
</gene>
<evidence type="ECO:0000255" key="1">
    <source>
        <dbReference type="HAMAP-Rule" id="MF_00672"/>
    </source>
</evidence>
<evidence type="ECO:0000305" key="2"/>
<dbReference type="EMBL" id="CP000668">
    <property type="protein sequence ID" value="ABP42220.1"/>
    <property type="status" value="ALT_INIT"/>
    <property type="molecule type" value="Genomic_DNA"/>
</dbReference>
<dbReference type="RefSeq" id="WP_002209010.1">
    <property type="nucleotide sequence ID" value="NZ_CP009715.1"/>
</dbReference>
<dbReference type="KEGG" id="ypp:YPDSF_3877"/>
<dbReference type="PATRIC" id="fig|386656.14.peg.641"/>
<dbReference type="GO" id="GO:0005886">
    <property type="term" value="C:plasma membrane"/>
    <property type="evidence" value="ECO:0007669"/>
    <property type="project" value="UniProtKB-SubCell"/>
</dbReference>
<dbReference type="HAMAP" id="MF_00672">
    <property type="entry name" value="UPF0761"/>
    <property type="match status" value="1"/>
</dbReference>
<dbReference type="InterPro" id="IPR023679">
    <property type="entry name" value="UPF0761_bac"/>
</dbReference>
<dbReference type="InterPro" id="IPR017039">
    <property type="entry name" value="Virul_fac_BrkB"/>
</dbReference>
<dbReference type="NCBIfam" id="NF002457">
    <property type="entry name" value="PRK01637.1"/>
    <property type="match status" value="1"/>
</dbReference>
<dbReference type="NCBIfam" id="TIGR00765">
    <property type="entry name" value="yihY_not_rbn"/>
    <property type="match status" value="1"/>
</dbReference>
<dbReference type="PANTHER" id="PTHR30213">
    <property type="entry name" value="INNER MEMBRANE PROTEIN YHJD"/>
    <property type="match status" value="1"/>
</dbReference>
<dbReference type="PANTHER" id="PTHR30213:SF0">
    <property type="entry name" value="UPF0761 MEMBRANE PROTEIN YIHY"/>
    <property type="match status" value="1"/>
</dbReference>
<dbReference type="Pfam" id="PF03631">
    <property type="entry name" value="Virul_fac_BrkB"/>
    <property type="match status" value="1"/>
</dbReference>
<dbReference type="PIRSF" id="PIRSF035875">
    <property type="entry name" value="RNase_BN"/>
    <property type="match status" value="1"/>
</dbReference>
<proteinExistence type="inferred from homology"/>
<name>Y3877_YERPP</name>
<comment type="subcellular location">
    <subcellularLocation>
        <location evidence="1">Cell inner membrane</location>
        <topology evidence="1">Multi-pass membrane protein</topology>
    </subcellularLocation>
</comment>
<comment type="similarity">
    <text evidence="1">Belongs to the UPF0761 family.</text>
</comment>
<comment type="sequence caution" evidence="2">
    <conflict type="erroneous initiation">
        <sequence resource="EMBL-CDS" id="ABP42220"/>
    </conflict>
</comment>
<keyword id="KW-0997">Cell inner membrane</keyword>
<keyword id="KW-1003">Cell membrane</keyword>
<keyword id="KW-0472">Membrane</keyword>
<keyword id="KW-0812">Transmembrane</keyword>
<keyword id="KW-1133">Transmembrane helix</keyword>
<reference key="1">
    <citation type="submission" date="2007-02" db="EMBL/GenBank/DDBJ databases">
        <title>Complete sequence of chromosome of Yersinia pestis Pestoides F.</title>
        <authorList>
            <consortium name="US DOE Joint Genome Institute"/>
            <person name="Copeland A."/>
            <person name="Lucas S."/>
            <person name="Lapidus A."/>
            <person name="Barry K."/>
            <person name="Detter J.C."/>
            <person name="Glavina del Rio T."/>
            <person name="Hammon N."/>
            <person name="Israni S."/>
            <person name="Dalin E."/>
            <person name="Tice H."/>
            <person name="Pitluck S."/>
            <person name="Di Bartolo G."/>
            <person name="Chain P."/>
            <person name="Malfatti S."/>
            <person name="Shin M."/>
            <person name="Vergez L."/>
            <person name="Schmutz J."/>
            <person name="Larimer F."/>
            <person name="Land M."/>
            <person name="Hauser L."/>
            <person name="Worsham P."/>
            <person name="Chu M."/>
            <person name="Bearden S."/>
            <person name="Garcia E."/>
            <person name="Richardson P."/>
        </authorList>
    </citation>
    <scope>NUCLEOTIDE SEQUENCE [LARGE SCALE GENOMIC DNA]</scope>
    <source>
        <strain>Pestoides F</strain>
    </source>
</reference>
<feature type="chain" id="PRO_0000391064" description="UPF0761 membrane protein YPDSF_3877">
    <location>
        <begin position="1"/>
        <end position="294"/>
    </location>
</feature>
<feature type="transmembrane region" description="Helical" evidence="1">
    <location>
        <begin position="44"/>
        <end position="64"/>
    </location>
</feature>
<feature type="transmembrane region" description="Helical" evidence="1">
    <location>
        <begin position="67"/>
        <end position="87"/>
    </location>
</feature>
<feature type="transmembrane region" description="Helical" evidence="1">
    <location>
        <begin position="108"/>
        <end position="128"/>
    </location>
</feature>
<feature type="transmembrane region" description="Helical" evidence="1">
    <location>
        <begin position="136"/>
        <end position="156"/>
    </location>
</feature>
<feature type="transmembrane region" description="Helical" evidence="1">
    <location>
        <begin position="185"/>
        <end position="205"/>
    </location>
</feature>
<feature type="transmembrane region" description="Helical" evidence="1">
    <location>
        <begin position="212"/>
        <end position="232"/>
    </location>
</feature>
<feature type="transmembrane region" description="Helical" evidence="1">
    <location>
        <begin position="246"/>
        <end position="266"/>
    </location>
</feature>
<accession>A4TSF8</accession>
<organism>
    <name type="scientific">Yersinia pestis (strain Pestoides F)</name>
    <dbReference type="NCBI Taxonomy" id="386656"/>
    <lineage>
        <taxon>Bacteria</taxon>
        <taxon>Pseudomonadati</taxon>
        <taxon>Pseudomonadota</taxon>
        <taxon>Gammaproteobacteria</taxon>
        <taxon>Enterobacterales</taxon>
        <taxon>Yersiniaceae</taxon>
        <taxon>Yersinia</taxon>
    </lineage>
</organism>
<sequence length="294" mass="33090">MASFRRFRLLSPLKPCVTFGRMLYTRIDKDGLTMLAGHLAYVSLLSLVPLITVIFALFAAFPMFAEISIKLKAFIFANFMPATGDIIQNYLEQFVANSNRMTVVGTCGLIVTALLLIYSVDSVLNIIWRSKIQRSLVFSFAVYWMVLTLGPILVGASMVISSYLLSLHWLAHARVDSMIDEILRVFPLLISWVSFWLLYSVVPTVRVPARDALIGALVAALLFELGKKGFAMYITLFPSYQLIYGVLAVIPILFLWVYWSWCIVLLGAEITVTLGEYRAERHHAKSVTTQSPEM</sequence>